<accession>B7JDJ2</accession>
<name>DAPF_BACC0</name>
<dbReference type="EC" id="5.1.1.7" evidence="1"/>
<dbReference type="EMBL" id="CP001283">
    <property type="protein sequence ID" value="ACK88043.1"/>
    <property type="molecule type" value="Genomic_DNA"/>
</dbReference>
<dbReference type="RefSeq" id="WP_000077384.1">
    <property type="nucleotide sequence ID" value="NC_011773.1"/>
</dbReference>
<dbReference type="SMR" id="B7JDJ2"/>
<dbReference type="KEGG" id="bcu:BCAH820_5045"/>
<dbReference type="HOGENOM" id="CLU_053306_3_0_9"/>
<dbReference type="UniPathway" id="UPA00034">
    <property type="reaction ID" value="UER00025"/>
</dbReference>
<dbReference type="Proteomes" id="UP000001363">
    <property type="component" value="Chromosome"/>
</dbReference>
<dbReference type="GO" id="GO:0005829">
    <property type="term" value="C:cytosol"/>
    <property type="evidence" value="ECO:0007669"/>
    <property type="project" value="TreeGrafter"/>
</dbReference>
<dbReference type="GO" id="GO:0008837">
    <property type="term" value="F:diaminopimelate epimerase activity"/>
    <property type="evidence" value="ECO:0007669"/>
    <property type="project" value="UniProtKB-UniRule"/>
</dbReference>
<dbReference type="GO" id="GO:0009089">
    <property type="term" value="P:lysine biosynthetic process via diaminopimelate"/>
    <property type="evidence" value="ECO:0007669"/>
    <property type="project" value="UniProtKB-UniRule"/>
</dbReference>
<dbReference type="FunFam" id="3.10.310.10:FF:000004">
    <property type="entry name" value="Diaminopimelate epimerase"/>
    <property type="match status" value="1"/>
</dbReference>
<dbReference type="FunFam" id="3.10.310.10:FF:000006">
    <property type="entry name" value="Diaminopimelate epimerase"/>
    <property type="match status" value="1"/>
</dbReference>
<dbReference type="Gene3D" id="3.10.310.10">
    <property type="entry name" value="Diaminopimelate Epimerase, Chain A, domain 1"/>
    <property type="match status" value="2"/>
</dbReference>
<dbReference type="HAMAP" id="MF_00197">
    <property type="entry name" value="DAP_epimerase"/>
    <property type="match status" value="1"/>
</dbReference>
<dbReference type="InterPro" id="IPR018510">
    <property type="entry name" value="DAP_epimerase_AS"/>
</dbReference>
<dbReference type="InterPro" id="IPR001653">
    <property type="entry name" value="DAP_epimerase_DapF"/>
</dbReference>
<dbReference type="NCBIfam" id="TIGR00652">
    <property type="entry name" value="DapF"/>
    <property type="match status" value="1"/>
</dbReference>
<dbReference type="PANTHER" id="PTHR31689:SF0">
    <property type="entry name" value="DIAMINOPIMELATE EPIMERASE"/>
    <property type="match status" value="1"/>
</dbReference>
<dbReference type="PANTHER" id="PTHR31689">
    <property type="entry name" value="DIAMINOPIMELATE EPIMERASE, CHLOROPLASTIC"/>
    <property type="match status" value="1"/>
</dbReference>
<dbReference type="Pfam" id="PF01678">
    <property type="entry name" value="DAP_epimerase"/>
    <property type="match status" value="2"/>
</dbReference>
<dbReference type="SUPFAM" id="SSF54506">
    <property type="entry name" value="Diaminopimelate epimerase-like"/>
    <property type="match status" value="1"/>
</dbReference>
<dbReference type="PROSITE" id="PS01326">
    <property type="entry name" value="DAP_EPIMERASE"/>
    <property type="match status" value="1"/>
</dbReference>
<organism>
    <name type="scientific">Bacillus cereus (strain AH820)</name>
    <dbReference type="NCBI Taxonomy" id="405535"/>
    <lineage>
        <taxon>Bacteria</taxon>
        <taxon>Bacillati</taxon>
        <taxon>Bacillota</taxon>
        <taxon>Bacilli</taxon>
        <taxon>Bacillales</taxon>
        <taxon>Bacillaceae</taxon>
        <taxon>Bacillus</taxon>
        <taxon>Bacillus cereus group</taxon>
    </lineage>
</organism>
<comment type="function">
    <text evidence="1">Catalyzes the stereoinversion of LL-2,6-diaminopimelate (L,L-DAP) to meso-diaminopimelate (meso-DAP), a precursor of L-lysine and an essential component of the bacterial peptidoglycan.</text>
</comment>
<comment type="catalytic activity">
    <reaction evidence="1">
        <text>(2S,6S)-2,6-diaminopimelate = meso-2,6-diaminopimelate</text>
        <dbReference type="Rhea" id="RHEA:15393"/>
        <dbReference type="ChEBI" id="CHEBI:57609"/>
        <dbReference type="ChEBI" id="CHEBI:57791"/>
        <dbReference type="EC" id="5.1.1.7"/>
    </reaction>
</comment>
<comment type="pathway">
    <text evidence="1">Amino-acid biosynthesis; L-lysine biosynthesis via DAP pathway; DL-2,6-diaminopimelate from LL-2,6-diaminopimelate: step 1/1.</text>
</comment>
<comment type="subunit">
    <text evidence="1">Homodimer.</text>
</comment>
<comment type="subcellular location">
    <subcellularLocation>
        <location evidence="1">Cytoplasm</location>
    </subcellularLocation>
</comment>
<comment type="similarity">
    <text evidence="1">Belongs to the diaminopimelate epimerase family.</text>
</comment>
<protein>
    <recommendedName>
        <fullName evidence="1">Diaminopimelate epimerase</fullName>
        <shortName evidence="1">DAP epimerase</shortName>
        <ecNumber evidence="1">5.1.1.7</ecNumber>
    </recommendedName>
    <alternativeName>
        <fullName evidence="1">PLP-independent amino acid racemase</fullName>
    </alternativeName>
</protein>
<keyword id="KW-0028">Amino-acid biosynthesis</keyword>
<keyword id="KW-0963">Cytoplasm</keyword>
<keyword id="KW-0413">Isomerase</keyword>
<keyword id="KW-0457">Lysine biosynthesis</keyword>
<sequence length="288" mass="31606">MSQFSFTKMHGLGNSYIYVNMFEEQIPEEDLALVAEKVSNINTGIGADGMILICPSDVAPVKMRMFNNDGSEGKSCGNGLRCVAKYAYEHKLVEDTVFTIETLAGIVTAEVTVEEGKVTLAKIDMGAPRLTRAEIPMLGEGETPFIRENFLYNNHRYAFTAVSMGNPHAVIFVDDVEQAPLTTLGPVLETHEMFPERVNVEFIEILNEEEMNFRVWERGSGVTQACGTGACAAVVASILNGKMERGKEITVHLAGGDLMIAWIEEGNVLMKGPAEVICHGVYEYKIEA</sequence>
<evidence type="ECO:0000255" key="1">
    <source>
        <dbReference type="HAMAP-Rule" id="MF_00197"/>
    </source>
</evidence>
<reference key="1">
    <citation type="submission" date="2008-10" db="EMBL/GenBank/DDBJ databases">
        <title>Genome sequence of Bacillus cereus AH820.</title>
        <authorList>
            <person name="Dodson R.J."/>
            <person name="Durkin A.S."/>
            <person name="Rosovitz M.J."/>
            <person name="Rasko D.A."/>
            <person name="Hoffmaster A."/>
            <person name="Ravel J."/>
            <person name="Sutton G."/>
        </authorList>
    </citation>
    <scope>NUCLEOTIDE SEQUENCE [LARGE SCALE GENOMIC DNA]</scope>
    <source>
        <strain>AH820</strain>
    </source>
</reference>
<gene>
    <name evidence="1" type="primary">dapF</name>
    <name type="ordered locus">BCAH820_5045</name>
</gene>
<proteinExistence type="inferred from homology"/>
<feature type="chain" id="PRO_1000118661" description="Diaminopimelate epimerase">
    <location>
        <begin position="1"/>
        <end position="288"/>
    </location>
</feature>
<feature type="active site" description="Proton donor" evidence="1">
    <location>
        <position position="76"/>
    </location>
</feature>
<feature type="active site" description="Proton acceptor" evidence="1">
    <location>
        <position position="226"/>
    </location>
</feature>
<feature type="binding site" evidence="1">
    <location>
        <position position="14"/>
    </location>
    <ligand>
        <name>substrate</name>
    </ligand>
</feature>
<feature type="binding site" evidence="1">
    <location>
        <position position="67"/>
    </location>
    <ligand>
        <name>substrate</name>
    </ligand>
</feature>
<feature type="binding site" evidence="1">
    <location>
        <begin position="77"/>
        <end position="78"/>
    </location>
    <ligand>
        <name>substrate</name>
    </ligand>
</feature>
<feature type="binding site" evidence="1">
    <location>
        <position position="166"/>
    </location>
    <ligand>
        <name>substrate</name>
    </ligand>
</feature>
<feature type="binding site" evidence="1">
    <location>
        <position position="199"/>
    </location>
    <ligand>
        <name>substrate</name>
    </ligand>
</feature>
<feature type="binding site" evidence="1">
    <location>
        <begin position="217"/>
        <end position="218"/>
    </location>
    <ligand>
        <name>substrate</name>
    </ligand>
</feature>
<feature type="binding site" evidence="1">
    <location>
        <begin position="227"/>
        <end position="228"/>
    </location>
    <ligand>
        <name>substrate</name>
    </ligand>
</feature>
<feature type="site" description="Could be important to modulate the pK values of the two catalytic cysteine residues" evidence="1">
    <location>
        <position position="168"/>
    </location>
</feature>
<feature type="site" description="Could be important to modulate the pK values of the two catalytic cysteine residues" evidence="1">
    <location>
        <position position="217"/>
    </location>
</feature>